<gene>
    <name evidence="1" type="primary">trpC</name>
    <name type="ordered locus">Aave_0586</name>
</gene>
<keyword id="KW-0028">Amino-acid biosynthesis</keyword>
<keyword id="KW-0057">Aromatic amino acid biosynthesis</keyword>
<keyword id="KW-0210">Decarboxylase</keyword>
<keyword id="KW-0456">Lyase</keyword>
<keyword id="KW-0822">Tryptophan biosynthesis</keyword>
<comment type="catalytic activity">
    <reaction evidence="1">
        <text>1-(2-carboxyphenylamino)-1-deoxy-D-ribulose 5-phosphate + H(+) = (1S,2R)-1-C-(indol-3-yl)glycerol 3-phosphate + CO2 + H2O</text>
        <dbReference type="Rhea" id="RHEA:23476"/>
        <dbReference type="ChEBI" id="CHEBI:15377"/>
        <dbReference type="ChEBI" id="CHEBI:15378"/>
        <dbReference type="ChEBI" id="CHEBI:16526"/>
        <dbReference type="ChEBI" id="CHEBI:58613"/>
        <dbReference type="ChEBI" id="CHEBI:58866"/>
        <dbReference type="EC" id="4.1.1.48"/>
    </reaction>
</comment>
<comment type="pathway">
    <text evidence="1">Amino-acid biosynthesis; L-tryptophan biosynthesis; L-tryptophan from chorismate: step 4/5.</text>
</comment>
<comment type="similarity">
    <text evidence="1">Belongs to the TrpC family.</text>
</comment>
<name>TRPC_PARC0</name>
<reference key="1">
    <citation type="submission" date="2006-12" db="EMBL/GenBank/DDBJ databases">
        <title>Complete sequence of Acidovorax avenae subsp. citrulli AAC00-1.</title>
        <authorList>
            <person name="Copeland A."/>
            <person name="Lucas S."/>
            <person name="Lapidus A."/>
            <person name="Barry K."/>
            <person name="Detter J.C."/>
            <person name="Glavina del Rio T."/>
            <person name="Dalin E."/>
            <person name="Tice H."/>
            <person name="Pitluck S."/>
            <person name="Kiss H."/>
            <person name="Brettin T."/>
            <person name="Bruce D."/>
            <person name="Han C."/>
            <person name="Tapia R."/>
            <person name="Gilna P."/>
            <person name="Schmutz J."/>
            <person name="Larimer F."/>
            <person name="Land M."/>
            <person name="Hauser L."/>
            <person name="Kyrpides N."/>
            <person name="Kim E."/>
            <person name="Stahl D."/>
            <person name="Richardson P."/>
        </authorList>
    </citation>
    <scope>NUCLEOTIDE SEQUENCE [LARGE SCALE GENOMIC DNA]</scope>
    <source>
        <strain>AAC00-1</strain>
    </source>
</reference>
<organism>
    <name type="scientific">Paracidovorax citrulli (strain AAC00-1)</name>
    <name type="common">Acidovorax citrulli</name>
    <dbReference type="NCBI Taxonomy" id="397945"/>
    <lineage>
        <taxon>Bacteria</taxon>
        <taxon>Pseudomonadati</taxon>
        <taxon>Pseudomonadota</taxon>
        <taxon>Betaproteobacteria</taxon>
        <taxon>Burkholderiales</taxon>
        <taxon>Comamonadaceae</taxon>
        <taxon>Paracidovorax</taxon>
    </lineage>
</organism>
<dbReference type="EC" id="4.1.1.48" evidence="1"/>
<dbReference type="EMBL" id="CP000512">
    <property type="protein sequence ID" value="ABM31190.1"/>
    <property type="molecule type" value="Genomic_DNA"/>
</dbReference>
<dbReference type="RefSeq" id="WP_011793761.1">
    <property type="nucleotide sequence ID" value="NC_008752.1"/>
</dbReference>
<dbReference type="SMR" id="A1TJQ2"/>
<dbReference type="STRING" id="397945.Aave_0586"/>
<dbReference type="GeneID" id="79790298"/>
<dbReference type="KEGG" id="aav:Aave_0586"/>
<dbReference type="eggNOG" id="COG0134">
    <property type="taxonomic scope" value="Bacteria"/>
</dbReference>
<dbReference type="HOGENOM" id="CLU_034247_2_0_4"/>
<dbReference type="OrthoDB" id="9804217at2"/>
<dbReference type="UniPathway" id="UPA00035">
    <property type="reaction ID" value="UER00043"/>
</dbReference>
<dbReference type="Proteomes" id="UP000002596">
    <property type="component" value="Chromosome"/>
</dbReference>
<dbReference type="GO" id="GO:0004425">
    <property type="term" value="F:indole-3-glycerol-phosphate synthase activity"/>
    <property type="evidence" value="ECO:0007669"/>
    <property type="project" value="UniProtKB-UniRule"/>
</dbReference>
<dbReference type="GO" id="GO:0004640">
    <property type="term" value="F:phosphoribosylanthranilate isomerase activity"/>
    <property type="evidence" value="ECO:0007669"/>
    <property type="project" value="TreeGrafter"/>
</dbReference>
<dbReference type="GO" id="GO:0000162">
    <property type="term" value="P:L-tryptophan biosynthetic process"/>
    <property type="evidence" value="ECO:0007669"/>
    <property type="project" value="UniProtKB-UniRule"/>
</dbReference>
<dbReference type="CDD" id="cd00331">
    <property type="entry name" value="IGPS"/>
    <property type="match status" value="1"/>
</dbReference>
<dbReference type="FunFam" id="3.20.20.70:FF:000024">
    <property type="entry name" value="Indole-3-glycerol phosphate synthase"/>
    <property type="match status" value="1"/>
</dbReference>
<dbReference type="Gene3D" id="3.20.20.70">
    <property type="entry name" value="Aldolase class I"/>
    <property type="match status" value="1"/>
</dbReference>
<dbReference type="HAMAP" id="MF_00134_B">
    <property type="entry name" value="IGPS_B"/>
    <property type="match status" value="1"/>
</dbReference>
<dbReference type="InterPro" id="IPR013785">
    <property type="entry name" value="Aldolase_TIM"/>
</dbReference>
<dbReference type="InterPro" id="IPR045186">
    <property type="entry name" value="Indole-3-glycerol_P_synth"/>
</dbReference>
<dbReference type="InterPro" id="IPR013798">
    <property type="entry name" value="Indole-3-glycerol_P_synth_dom"/>
</dbReference>
<dbReference type="InterPro" id="IPR001468">
    <property type="entry name" value="Indole-3-GlycerolPSynthase_CS"/>
</dbReference>
<dbReference type="InterPro" id="IPR011060">
    <property type="entry name" value="RibuloseP-bd_barrel"/>
</dbReference>
<dbReference type="NCBIfam" id="NF001370">
    <property type="entry name" value="PRK00278.1-2"/>
    <property type="match status" value="1"/>
</dbReference>
<dbReference type="NCBIfam" id="NF001373">
    <property type="entry name" value="PRK00278.1-6"/>
    <property type="match status" value="1"/>
</dbReference>
<dbReference type="NCBIfam" id="NF001377">
    <property type="entry name" value="PRK00278.2-4"/>
    <property type="match status" value="1"/>
</dbReference>
<dbReference type="PANTHER" id="PTHR22854:SF2">
    <property type="entry name" value="INDOLE-3-GLYCEROL-PHOSPHATE SYNTHASE"/>
    <property type="match status" value="1"/>
</dbReference>
<dbReference type="PANTHER" id="PTHR22854">
    <property type="entry name" value="TRYPTOPHAN BIOSYNTHESIS PROTEIN"/>
    <property type="match status" value="1"/>
</dbReference>
<dbReference type="Pfam" id="PF00218">
    <property type="entry name" value="IGPS"/>
    <property type="match status" value="1"/>
</dbReference>
<dbReference type="SUPFAM" id="SSF51366">
    <property type="entry name" value="Ribulose-phoshate binding barrel"/>
    <property type="match status" value="1"/>
</dbReference>
<dbReference type="PROSITE" id="PS00614">
    <property type="entry name" value="IGPS"/>
    <property type="match status" value="1"/>
</dbReference>
<evidence type="ECO:0000255" key="1">
    <source>
        <dbReference type="HAMAP-Rule" id="MF_00134"/>
    </source>
</evidence>
<sequence>MSDILNKIVAVKREEIAAAQKKIPLAAMRADAESRVLTRDFEGALRAKIAAGQAAVIAEIKKASPSKGVIRENFIPADIAQSYAEGNGKVSAACLSVLTDRQFFQGQPDYLKQARASCALPVLRKDFMVDAYQIYESRAMGADAILLIAACLEDAQMAEFEAIAHSLGMAALVEVHDGAELDRALKLRTPLVGINNRNLRTFEVSLDTTVSLRKAVPSDRLLVAESGILTPQDVKTLRDADVHAFLVGEAFMRAQEPGAALAKLFA</sequence>
<accession>A1TJQ2</accession>
<protein>
    <recommendedName>
        <fullName evidence="1">Indole-3-glycerol phosphate synthase</fullName>
        <shortName evidence="1">IGPS</shortName>
        <ecNumber evidence="1">4.1.1.48</ecNumber>
    </recommendedName>
</protein>
<feature type="chain" id="PRO_1000018429" description="Indole-3-glycerol phosphate synthase">
    <location>
        <begin position="1"/>
        <end position="266"/>
    </location>
</feature>
<proteinExistence type="inferred from homology"/>